<dbReference type="EMBL" id="CP000653">
    <property type="protein sequence ID" value="ABP62563.1"/>
    <property type="molecule type" value="Genomic_DNA"/>
</dbReference>
<dbReference type="RefSeq" id="WP_015960868.1">
    <property type="nucleotide sequence ID" value="NC_009436.1"/>
</dbReference>
<dbReference type="STRING" id="399742.Ent638_3908"/>
<dbReference type="GeneID" id="93306874"/>
<dbReference type="KEGG" id="ent:Ent638_3908"/>
<dbReference type="eggNOG" id="ENOG502ZP3V">
    <property type="taxonomic scope" value="Bacteria"/>
</dbReference>
<dbReference type="HOGENOM" id="CLU_151816_0_0_6"/>
<dbReference type="OrthoDB" id="6432605at2"/>
<dbReference type="Proteomes" id="UP000000230">
    <property type="component" value="Chromosome"/>
</dbReference>
<dbReference type="GO" id="GO:0005886">
    <property type="term" value="C:plasma membrane"/>
    <property type="evidence" value="ECO:0007669"/>
    <property type="project" value="UniProtKB-SubCell"/>
</dbReference>
<dbReference type="HAMAP" id="MF_01088">
    <property type="entry name" value="UspB"/>
    <property type="match status" value="1"/>
</dbReference>
<dbReference type="InterPro" id="IPR019598">
    <property type="entry name" value="Universal_stress_protein_B"/>
</dbReference>
<dbReference type="NCBIfam" id="NF003435">
    <property type="entry name" value="PRK04960.1"/>
    <property type="match status" value="1"/>
</dbReference>
<dbReference type="Pfam" id="PF10625">
    <property type="entry name" value="UspB"/>
    <property type="match status" value="1"/>
</dbReference>
<accession>A4WFT3</accession>
<proteinExistence type="inferred from homology"/>
<name>USPB_ENT38</name>
<evidence type="ECO:0000255" key="1">
    <source>
        <dbReference type="HAMAP-Rule" id="MF_01088"/>
    </source>
</evidence>
<organism>
    <name type="scientific">Enterobacter sp. (strain 638)</name>
    <dbReference type="NCBI Taxonomy" id="399742"/>
    <lineage>
        <taxon>Bacteria</taxon>
        <taxon>Pseudomonadati</taxon>
        <taxon>Pseudomonadota</taxon>
        <taxon>Gammaproteobacteria</taxon>
        <taxon>Enterobacterales</taxon>
        <taxon>Enterobacteriaceae</taxon>
        <taxon>Enterobacter</taxon>
    </lineage>
</organism>
<comment type="subcellular location">
    <subcellularLocation>
        <location evidence="1">Cell inner membrane</location>
        <topology evidence="1">Multi-pass membrane protein</topology>
    </subcellularLocation>
</comment>
<comment type="similarity">
    <text evidence="1">Belongs to the universal stress protein B family.</text>
</comment>
<sequence>MISTVALFWALCVVCIVNMARYFSSLRALLVVLRGCDPLLYQYVDGGGFFTSHGQPSKQMRLVWYIYAQRYRDHHDDEFIRRCERLRCQFILTSALCGLVVVSMVALLIWH</sequence>
<gene>
    <name evidence="1" type="primary">uspB</name>
    <name type="ordered locus">Ent638_3908</name>
</gene>
<reference key="1">
    <citation type="journal article" date="2010" name="PLoS Genet.">
        <title>Genome sequence of the plant growth promoting endophytic bacterium Enterobacter sp. 638.</title>
        <authorList>
            <person name="Taghavi S."/>
            <person name="van der Lelie D."/>
            <person name="Hoffman A."/>
            <person name="Zhang Y.B."/>
            <person name="Walla M.D."/>
            <person name="Vangronsveld J."/>
            <person name="Newman L."/>
            <person name="Monchy S."/>
        </authorList>
    </citation>
    <scope>NUCLEOTIDE SEQUENCE [LARGE SCALE GENOMIC DNA]</scope>
    <source>
        <strain>638</strain>
    </source>
</reference>
<keyword id="KW-0997">Cell inner membrane</keyword>
<keyword id="KW-1003">Cell membrane</keyword>
<keyword id="KW-0472">Membrane</keyword>
<keyword id="KW-0812">Transmembrane</keyword>
<keyword id="KW-1133">Transmembrane helix</keyword>
<protein>
    <recommendedName>
        <fullName evidence="1">Universal stress protein B</fullName>
    </recommendedName>
</protein>
<feature type="chain" id="PRO_1000064876" description="Universal stress protein B">
    <location>
        <begin position="1"/>
        <end position="111"/>
    </location>
</feature>
<feature type="transmembrane region" description="Helical" evidence="1">
    <location>
        <begin position="1"/>
        <end position="21"/>
    </location>
</feature>
<feature type="transmembrane region" description="Helical" evidence="1">
    <location>
        <begin position="90"/>
        <end position="110"/>
    </location>
</feature>